<keyword id="KW-0067">ATP-binding</keyword>
<keyword id="KW-0436">Ligase</keyword>
<keyword id="KW-0547">Nucleotide-binding</keyword>
<keyword id="KW-0648">Protein biosynthesis</keyword>
<keyword id="KW-1185">Reference proteome</keyword>
<gene>
    <name evidence="1" type="primary">gatA</name>
    <name type="ordered locus">MMP1510</name>
</gene>
<name>GATA_METMP</name>
<reference key="1">
    <citation type="journal article" date="2004" name="J. Bacteriol.">
        <title>Complete genome sequence of the genetically tractable hydrogenotrophic methanogen Methanococcus maripaludis.</title>
        <authorList>
            <person name="Hendrickson E.L."/>
            <person name="Kaul R."/>
            <person name="Zhou Y."/>
            <person name="Bovee D."/>
            <person name="Chapman P."/>
            <person name="Chung J."/>
            <person name="Conway de Macario E."/>
            <person name="Dodsworth J.A."/>
            <person name="Gillett W."/>
            <person name="Graham D.E."/>
            <person name="Hackett M."/>
            <person name="Haydock A.K."/>
            <person name="Kang A."/>
            <person name="Land M.L."/>
            <person name="Levy R."/>
            <person name="Lie T.J."/>
            <person name="Major T.A."/>
            <person name="Moore B.C."/>
            <person name="Porat I."/>
            <person name="Palmeiri A."/>
            <person name="Rouse G."/>
            <person name="Saenphimmachak C."/>
            <person name="Soell D."/>
            <person name="Van Dien S."/>
            <person name="Wang T."/>
            <person name="Whitman W.B."/>
            <person name="Xia Q."/>
            <person name="Zhang Y."/>
            <person name="Larimer F.W."/>
            <person name="Olson M.V."/>
            <person name="Leigh J.A."/>
        </authorList>
    </citation>
    <scope>NUCLEOTIDE SEQUENCE [LARGE SCALE GENOMIC DNA]</scope>
    <source>
        <strain>DSM 14266 / JCM 13030 / NBRC 101832 / S2 / LL</strain>
    </source>
</reference>
<dbReference type="EC" id="6.3.5.7" evidence="1"/>
<dbReference type="EMBL" id="BX950229">
    <property type="protein sequence ID" value="CAF31066.1"/>
    <property type="molecule type" value="Genomic_DNA"/>
</dbReference>
<dbReference type="RefSeq" id="WP_011171454.1">
    <property type="nucleotide sequence ID" value="NC_005791.1"/>
</dbReference>
<dbReference type="SMR" id="Q6LX43"/>
<dbReference type="STRING" id="267377.MMP1510"/>
<dbReference type="EnsemblBacteria" id="CAF31066">
    <property type="protein sequence ID" value="CAF31066"/>
    <property type="gene ID" value="MMP1510"/>
</dbReference>
<dbReference type="GeneID" id="41280144"/>
<dbReference type="KEGG" id="mmp:MMP1510"/>
<dbReference type="PATRIC" id="fig|267377.15.peg.1547"/>
<dbReference type="eggNOG" id="arCOG01717">
    <property type="taxonomic scope" value="Archaea"/>
</dbReference>
<dbReference type="HOGENOM" id="CLU_009600_0_3_2"/>
<dbReference type="OrthoDB" id="7931at2157"/>
<dbReference type="Proteomes" id="UP000000590">
    <property type="component" value="Chromosome"/>
</dbReference>
<dbReference type="GO" id="GO:0030956">
    <property type="term" value="C:glutamyl-tRNA(Gln) amidotransferase complex"/>
    <property type="evidence" value="ECO:0007669"/>
    <property type="project" value="InterPro"/>
</dbReference>
<dbReference type="GO" id="GO:0005524">
    <property type="term" value="F:ATP binding"/>
    <property type="evidence" value="ECO:0007669"/>
    <property type="project" value="UniProtKB-KW"/>
</dbReference>
<dbReference type="GO" id="GO:0050567">
    <property type="term" value="F:glutaminyl-tRNA synthase (glutamine-hydrolyzing) activity"/>
    <property type="evidence" value="ECO:0007669"/>
    <property type="project" value="UniProtKB-UniRule"/>
</dbReference>
<dbReference type="GO" id="GO:0006412">
    <property type="term" value="P:translation"/>
    <property type="evidence" value="ECO:0007669"/>
    <property type="project" value="UniProtKB-UniRule"/>
</dbReference>
<dbReference type="Gene3D" id="3.90.1300.10">
    <property type="entry name" value="Amidase signature (AS) domain"/>
    <property type="match status" value="1"/>
</dbReference>
<dbReference type="HAMAP" id="MF_00120">
    <property type="entry name" value="GatA"/>
    <property type="match status" value="1"/>
</dbReference>
<dbReference type="InterPro" id="IPR000120">
    <property type="entry name" value="Amidase"/>
</dbReference>
<dbReference type="InterPro" id="IPR020556">
    <property type="entry name" value="Amidase_CS"/>
</dbReference>
<dbReference type="InterPro" id="IPR023631">
    <property type="entry name" value="Amidase_dom"/>
</dbReference>
<dbReference type="InterPro" id="IPR036928">
    <property type="entry name" value="AS_sf"/>
</dbReference>
<dbReference type="InterPro" id="IPR004412">
    <property type="entry name" value="GatA"/>
</dbReference>
<dbReference type="NCBIfam" id="TIGR00132">
    <property type="entry name" value="gatA"/>
    <property type="match status" value="1"/>
</dbReference>
<dbReference type="PANTHER" id="PTHR11895:SF7">
    <property type="entry name" value="GLUTAMYL-TRNA(GLN) AMIDOTRANSFERASE SUBUNIT A, MITOCHONDRIAL"/>
    <property type="match status" value="1"/>
</dbReference>
<dbReference type="PANTHER" id="PTHR11895">
    <property type="entry name" value="TRANSAMIDASE"/>
    <property type="match status" value="1"/>
</dbReference>
<dbReference type="Pfam" id="PF01425">
    <property type="entry name" value="Amidase"/>
    <property type="match status" value="1"/>
</dbReference>
<dbReference type="SUPFAM" id="SSF75304">
    <property type="entry name" value="Amidase signature (AS) enzymes"/>
    <property type="match status" value="1"/>
</dbReference>
<dbReference type="PROSITE" id="PS00571">
    <property type="entry name" value="AMIDASES"/>
    <property type="match status" value="1"/>
</dbReference>
<feature type="chain" id="PRO_0000241180" description="Glutamyl-tRNA(Gln) amidotransferase subunit A">
    <location>
        <begin position="1"/>
        <end position="431"/>
    </location>
</feature>
<feature type="active site" description="Charge relay system" evidence="1">
    <location>
        <position position="55"/>
    </location>
</feature>
<feature type="active site" description="Charge relay system" evidence="1">
    <location>
        <position position="130"/>
    </location>
</feature>
<feature type="active site" description="Acyl-ester intermediate" evidence="1">
    <location>
        <position position="154"/>
    </location>
</feature>
<evidence type="ECO:0000255" key="1">
    <source>
        <dbReference type="HAMAP-Rule" id="MF_00120"/>
    </source>
</evidence>
<protein>
    <recommendedName>
        <fullName evidence="1">Glutamyl-tRNA(Gln) amidotransferase subunit A</fullName>
        <shortName evidence="1">Glu-ADT subunit A</shortName>
        <ecNumber evidence="1">6.3.5.7</ecNumber>
    </recommendedName>
</protein>
<accession>Q6LX43</accession>
<sequence length="431" mass="47139">MITDRVSDYLEKIEKSDVNAFIDVNGEKVLKEAEELEKNDTLKNKPLYGKIVAVKSNINVKGYKISCASKTLEKYVGTYDATVVKKLRSQGALIVGMTNMDEFAGGSSGETSCYGPTKNPAAMDRIPGGSSSGSAAAVAADLCDMAIGSDTGGSIRNPASHCGIVGFKPSYGVVSRQGLCDLAMSFDQIGPLTKNAEDALVLTNAIKGIDRSDSTSLETPKFEKKDISNYKIGVVKEFMDVTDEKIRNEIEKGIEVFKDMGCKIVDLSYKYIDLALPTYYLINYVEFFSATRKYDGRRYGEFIEEACGEEVLRRILIGKHISEQEFSGKYYKKALQARKSMKKEMLGLFNSADLIVGPTVPKLPHKLGEDVSPMEMYAYDVLTVPTNICGICSGVVRCGNISGVPVGLQIQGAPLEDEKVLSAMIEFEKNY</sequence>
<proteinExistence type="inferred from homology"/>
<organism>
    <name type="scientific">Methanococcus maripaludis (strain DSM 14266 / JCM 13030 / NBRC 101832 / S2 / LL)</name>
    <dbReference type="NCBI Taxonomy" id="267377"/>
    <lineage>
        <taxon>Archaea</taxon>
        <taxon>Methanobacteriati</taxon>
        <taxon>Methanobacteriota</taxon>
        <taxon>Methanomada group</taxon>
        <taxon>Methanococci</taxon>
        <taxon>Methanococcales</taxon>
        <taxon>Methanococcaceae</taxon>
        <taxon>Methanococcus</taxon>
    </lineage>
</organism>
<comment type="function">
    <text evidence="1">Allows the formation of correctly charged Gln-tRNA(Gln) through the transamidation of misacylated Glu-tRNA(Gln) in organisms which lack glutaminyl-tRNA synthetase. The reaction takes place in the presence of glutamine and ATP through an activated gamma-phospho-Glu-tRNA(Gln).</text>
</comment>
<comment type="catalytic activity">
    <reaction evidence="1">
        <text>L-glutamyl-tRNA(Gln) + L-glutamine + ATP + H2O = L-glutaminyl-tRNA(Gln) + L-glutamate + ADP + phosphate + H(+)</text>
        <dbReference type="Rhea" id="RHEA:17521"/>
        <dbReference type="Rhea" id="RHEA-COMP:9681"/>
        <dbReference type="Rhea" id="RHEA-COMP:9684"/>
        <dbReference type="ChEBI" id="CHEBI:15377"/>
        <dbReference type="ChEBI" id="CHEBI:15378"/>
        <dbReference type="ChEBI" id="CHEBI:29985"/>
        <dbReference type="ChEBI" id="CHEBI:30616"/>
        <dbReference type="ChEBI" id="CHEBI:43474"/>
        <dbReference type="ChEBI" id="CHEBI:58359"/>
        <dbReference type="ChEBI" id="CHEBI:78520"/>
        <dbReference type="ChEBI" id="CHEBI:78521"/>
        <dbReference type="ChEBI" id="CHEBI:456216"/>
        <dbReference type="EC" id="6.3.5.7"/>
    </reaction>
</comment>
<comment type="subunit">
    <text evidence="1">Heterotrimer of A, B and C subunits.</text>
</comment>
<comment type="similarity">
    <text evidence="1">Belongs to the amidase family. GatA subfamily.</text>
</comment>